<keyword id="KW-0002">3D-structure</keyword>
<keyword id="KW-0903">Direct protein sequencing</keyword>
<keyword id="KW-0325">Glycoprotein</keyword>
<keyword id="KW-0646">Protease inhibitor</keyword>
<keyword id="KW-1267">Proteomics identification</keyword>
<keyword id="KW-1185">Reference proteome</keyword>
<keyword id="KW-0964">Secreted</keyword>
<keyword id="KW-0722">Serine protease inhibitor</keyword>
<keyword id="KW-0732">Signal</keyword>
<organism>
    <name type="scientific">Homo sapiens</name>
    <name type="common">Human</name>
    <dbReference type="NCBI Taxonomy" id="9606"/>
    <lineage>
        <taxon>Eukaryota</taxon>
        <taxon>Metazoa</taxon>
        <taxon>Chordata</taxon>
        <taxon>Craniata</taxon>
        <taxon>Vertebrata</taxon>
        <taxon>Euteleostomi</taxon>
        <taxon>Mammalia</taxon>
        <taxon>Eutheria</taxon>
        <taxon>Euarchontoglires</taxon>
        <taxon>Primates</taxon>
        <taxon>Haplorrhini</taxon>
        <taxon>Catarrhini</taxon>
        <taxon>Hominidae</taxon>
        <taxon>Homo</taxon>
    </lineage>
</organism>
<evidence type="ECO:0000255" key="1"/>
<evidence type="ECO:0000269" key="2">
    <source>
    </source>
</evidence>
<evidence type="ECO:0000269" key="3">
    <source>
    </source>
</evidence>
<evidence type="ECO:0000269" key="4">
    <source>
    </source>
</evidence>
<evidence type="ECO:0000269" key="5">
    <source>
    </source>
</evidence>
<evidence type="ECO:0000305" key="6"/>
<evidence type="ECO:0007829" key="7">
    <source>
        <dbReference type="PDB" id="6F02"/>
    </source>
</evidence>
<feature type="signal peptide" evidence="1">
    <location>
        <begin position="1"/>
        <end position="20"/>
    </location>
</feature>
<feature type="chain" id="PRO_0000032425" description="Kallistatin">
    <location>
        <begin position="21"/>
        <end position="427"/>
    </location>
</feature>
<feature type="site" description="Reactive bond">
    <location>
        <begin position="388"/>
        <end position="389"/>
    </location>
</feature>
<feature type="glycosylation site" description="N-linked (GlcNAc...) asparagine" evidence="1">
    <location>
        <position position="33"/>
    </location>
</feature>
<feature type="glycosylation site" description="N-linked (GlcNAc...) asparagine" evidence="3">
    <location>
        <position position="108"/>
    </location>
</feature>
<feature type="glycosylation site" description="N-linked (GlcNAc...) asparagine" evidence="2 3">
    <location>
        <position position="157"/>
    </location>
</feature>
<feature type="glycosylation site" description="N-linked (GlcNAc...) (complex) asparagine" evidence="3 4">
    <location>
        <position position="238"/>
    </location>
</feature>
<feature type="sequence conflict" description="In Ref. 1 and 2." evidence="6" ref="1 2">
    <original>S</original>
    <variation>T</variation>
    <location>
        <position position="382"/>
    </location>
</feature>
<feature type="turn" evidence="7">
    <location>
        <begin position="48"/>
        <end position="50"/>
    </location>
</feature>
<feature type="helix" evidence="7">
    <location>
        <begin position="52"/>
        <end position="69"/>
    </location>
</feature>
<feature type="strand" evidence="7">
    <location>
        <begin position="75"/>
        <end position="77"/>
    </location>
</feature>
<feature type="helix" evidence="7">
    <location>
        <begin position="79"/>
        <end position="89"/>
    </location>
</feature>
<feature type="turn" evidence="7">
    <location>
        <begin position="90"/>
        <end position="92"/>
    </location>
</feature>
<feature type="helix" evidence="7">
    <location>
        <begin position="96"/>
        <end position="104"/>
    </location>
</feature>
<feature type="turn" evidence="7">
    <location>
        <begin position="109"/>
        <end position="111"/>
    </location>
</feature>
<feature type="helix" evidence="7">
    <location>
        <begin position="114"/>
        <end position="128"/>
    </location>
</feature>
<feature type="strand" evidence="7">
    <location>
        <begin position="136"/>
        <end position="149"/>
    </location>
</feature>
<feature type="helix" evidence="7">
    <location>
        <begin position="153"/>
        <end position="163"/>
    </location>
</feature>
<feature type="strand" evidence="7">
    <location>
        <begin position="166"/>
        <end position="170"/>
    </location>
</feature>
<feature type="helix" evidence="7">
    <location>
        <begin position="175"/>
        <end position="189"/>
    </location>
</feature>
<feature type="turn" evidence="7">
    <location>
        <begin position="190"/>
        <end position="192"/>
    </location>
</feature>
<feature type="strand" evidence="7">
    <location>
        <begin position="207"/>
        <end position="216"/>
    </location>
</feature>
<feature type="strand" evidence="7">
    <location>
        <begin position="218"/>
        <end position="221"/>
    </location>
</feature>
<feature type="helix" evidence="7">
    <location>
        <begin position="225"/>
        <end position="227"/>
    </location>
</feature>
<feature type="strand" evidence="7">
    <location>
        <begin position="229"/>
        <end position="233"/>
    </location>
</feature>
<feature type="strand" evidence="7">
    <location>
        <begin position="235"/>
        <end position="238"/>
    </location>
</feature>
<feature type="strand" evidence="7">
    <location>
        <begin position="241"/>
        <end position="248"/>
    </location>
</feature>
<feature type="strand" evidence="7">
    <location>
        <begin position="250"/>
        <end position="257"/>
    </location>
</feature>
<feature type="strand" evidence="7">
    <location>
        <begin position="259"/>
        <end position="281"/>
    </location>
</feature>
<feature type="helix" evidence="7">
    <location>
        <begin position="286"/>
        <end position="291"/>
    </location>
</feature>
<feature type="helix" evidence="7">
    <location>
        <begin position="295"/>
        <end position="304"/>
    </location>
</feature>
<feature type="helix" evidence="7">
    <location>
        <begin position="308"/>
        <end position="310"/>
    </location>
</feature>
<feature type="strand" evidence="7">
    <location>
        <begin position="311"/>
        <end position="313"/>
    </location>
</feature>
<feature type="strand" evidence="7">
    <location>
        <begin position="315"/>
        <end position="319"/>
    </location>
</feature>
<feature type="strand" evidence="7">
    <location>
        <begin position="321"/>
        <end position="328"/>
    </location>
</feature>
<feature type="helix" evidence="7">
    <location>
        <begin position="329"/>
        <end position="332"/>
    </location>
</feature>
<feature type="helix" evidence="7">
    <location>
        <begin position="333"/>
        <end position="336"/>
    </location>
</feature>
<feature type="turn" evidence="7">
    <location>
        <begin position="339"/>
        <end position="341"/>
    </location>
</feature>
<feature type="turn" evidence="7">
    <location>
        <begin position="349"/>
        <end position="351"/>
    </location>
</feature>
<feature type="strand" evidence="7">
    <location>
        <begin position="353"/>
        <end position="355"/>
    </location>
</feature>
<feature type="strand" evidence="7">
    <location>
        <begin position="361"/>
        <end position="370"/>
    </location>
</feature>
<feature type="strand" evidence="7">
    <location>
        <begin position="372"/>
        <end position="375"/>
    </location>
</feature>
<feature type="strand" evidence="7">
    <location>
        <begin position="396"/>
        <end position="398"/>
    </location>
</feature>
<feature type="strand" evidence="7">
    <location>
        <begin position="403"/>
        <end position="409"/>
    </location>
</feature>
<feature type="turn" evidence="7">
    <location>
        <begin position="410"/>
        <end position="413"/>
    </location>
</feature>
<feature type="strand" evidence="7">
    <location>
        <begin position="414"/>
        <end position="422"/>
    </location>
</feature>
<dbReference type="EMBL" id="L19684">
    <property type="protein sequence ID" value="AAA59454.1"/>
    <property type="molecule type" value="mRNA"/>
</dbReference>
<dbReference type="EMBL" id="L28101">
    <property type="protein sequence ID" value="AAC41706.1"/>
    <property type="molecule type" value="Genomic_DNA"/>
</dbReference>
<dbReference type="EMBL" id="BX248009">
    <property type="protein sequence ID" value="CAD62337.1"/>
    <property type="molecule type" value="mRNA"/>
</dbReference>
<dbReference type="EMBL" id="BX248760">
    <property type="protein sequence ID" value="CAD66567.1"/>
    <property type="status" value="ALT_INIT"/>
    <property type="molecule type" value="mRNA"/>
</dbReference>
<dbReference type="EMBL" id="BC014992">
    <property type="protein sequence ID" value="AAH14992.1"/>
    <property type="molecule type" value="mRNA"/>
</dbReference>
<dbReference type="CCDS" id="CCDS9927.1"/>
<dbReference type="PIR" id="A49518">
    <property type="entry name" value="A49518"/>
</dbReference>
<dbReference type="RefSeq" id="NP_001275961.1">
    <property type="nucleotide sequence ID" value="NM_001289032.1"/>
</dbReference>
<dbReference type="RefSeq" id="NP_001275962.1">
    <property type="nucleotide sequence ID" value="NM_001289033.2"/>
</dbReference>
<dbReference type="RefSeq" id="NP_006206.2">
    <property type="nucleotide sequence ID" value="NM_006215.3"/>
</dbReference>
<dbReference type="PDB" id="6F02">
    <property type="method" value="X-ray"/>
    <property type="resolution" value="3.00 A"/>
    <property type="chains" value="A/C=45-427"/>
</dbReference>
<dbReference type="PDBsum" id="6F02"/>
<dbReference type="SMR" id="P29622"/>
<dbReference type="BioGRID" id="111285">
    <property type="interactions" value="21"/>
</dbReference>
<dbReference type="FunCoup" id="P29622">
    <property type="interactions" value="59"/>
</dbReference>
<dbReference type="IntAct" id="P29622">
    <property type="interactions" value="15"/>
</dbReference>
<dbReference type="MINT" id="P29622"/>
<dbReference type="STRING" id="9606.ENSP00000451172"/>
<dbReference type="DrugBank" id="DB09130">
    <property type="generic name" value="Copper"/>
</dbReference>
<dbReference type="DrugBank" id="DB01593">
    <property type="generic name" value="Zinc"/>
</dbReference>
<dbReference type="DrugBank" id="DB14487">
    <property type="generic name" value="Zinc acetate"/>
</dbReference>
<dbReference type="MEROPS" id="I04.003"/>
<dbReference type="GlyConnect" id="1429">
    <property type="glycosylation" value="17 N-Linked glycans (3 sites)"/>
</dbReference>
<dbReference type="GlyCosmos" id="P29622">
    <property type="glycosylation" value="4 sites, 20 glycans"/>
</dbReference>
<dbReference type="GlyGen" id="P29622">
    <property type="glycosylation" value="4 sites, 39 N-linked glycans (3 sites)"/>
</dbReference>
<dbReference type="iPTMnet" id="P29622"/>
<dbReference type="PhosphoSitePlus" id="P29622"/>
<dbReference type="BioMuta" id="SERPINA4"/>
<dbReference type="DMDM" id="68067608"/>
<dbReference type="CPTAC" id="CPTAC-672"/>
<dbReference type="CPTAC" id="non-CPTAC-1135"/>
<dbReference type="jPOST" id="P29622"/>
<dbReference type="MassIVE" id="P29622"/>
<dbReference type="PaxDb" id="9606-ENSP00000450838"/>
<dbReference type="PeptideAtlas" id="P29622"/>
<dbReference type="ProteomicsDB" id="54602"/>
<dbReference type="TopDownProteomics" id="P29622"/>
<dbReference type="Antibodypedia" id="118">
    <property type="antibodies" value="227 antibodies from 31 providers"/>
</dbReference>
<dbReference type="DNASU" id="5267"/>
<dbReference type="Ensembl" id="ENST00000298841.5">
    <property type="protein sequence ID" value="ENSP00000298841.5"/>
    <property type="gene ID" value="ENSG00000100665.12"/>
</dbReference>
<dbReference type="Ensembl" id="ENST00000555095.5">
    <property type="protein sequence ID" value="ENSP00000451172.1"/>
    <property type="gene ID" value="ENSG00000100665.12"/>
</dbReference>
<dbReference type="Ensembl" id="ENST00000557004.6">
    <property type="protein sequence ID" value="ENSP00000450838.1"/>
    <property type="gene ID" value="ENSG00000100665.12"/>
</dbReference>
<dbReference type="GeneID" id="5267"/>
<dbReference type="KEGG" id="hsa:5267"/>
<dbReference type="MANE-Select" id="ENST00000557004.6">
    <property type="protein sequence ID" value="ENSP00000450838.1"/>
    <property type="RefSeq nucleotide sequence ID" value="NM_006215.4"/>
    <property type="RefSeq protein sequence ID" value="NP_006206.2"/>
</dbReference>
<dbReference type="UCSC" id="uc001ydk.5">
    <property type="organism name" value="human"/>
</dbReference>
<dbReference type="AGR" id="HGNC:8948"/>
<dbReference type="CTD" id="5267"/>
<dbReference type="DisGeNET" id="5267"/>
<dbReference type="GeneCards" id="SERPINA4"/>
<dbReference type="HGNC" id="HGNC:8948">
    <property type="gene designation" value="SERPINA4"/>
</dbReference>
<dbReference type="HPA" id="ENSG00000100665">
    <property type="expression patterns" value="Tissue enriched (liver)"/>
</dbReference>
<dbReference type="MIM" id="147935">
    <property type="type" value="gene"/>
</dbReference>
<dbReference type="neXtProt" id="NX_P29622"/>
<dbReference type="OpenTargets" id="ENSG00000100665"/>
<dbReference type="PharmGKB" id="PA35514"/>
<dbReference type="VEuPathDB" id="HostDB:ENSG00000100665"/>
<dbReference type="eggNOG" id="KOG2392">
    <property type="taxonomic scope" value="Eukaryota"/>
</dbReference>
<dbReference type="GeneTree" id="ENSGT00940000160877"/>
<dbReference type="HOGENOM" id="CLU_023330_2_1_1"/>
<dbReference type="InParanoid" id="P29622"/>
<dbReference type="OMA" id="LWFNRPF"/>
<dbReference type="OrthoDB" id="671595at2759"/>
<dbReference type="PAN-GO" id="P29622">
    <property type="GO annotations" value="3 GO annotations based on evolutionary models"/>
</dbReference>
<dbReference type="PhylomeDB" id="P29622"/>
<dbReference type="TreeFam" id="TF343201"/>
<dbReference type="PathwayCommons" id="P29622"/>
<dbReference type="Reactome" id="R-HSA-114608">
    <property type="pathway name" value="Platelet degranulation"/>
</dbReference>
<dbReference type="Reactome" id="R-HSA-9925561">
    <property type="pathway name" value="Developmental Lineage of Pancreatic Acinar Cells"/>
</dbReference>
<dbReference type="SignaLink" id="P29622"/>
<dbReference type="BioGRID-ORCS" id="5267">
    <property type="hits" value="3 hits in 1143 CRISPR screens"/>
</dbReference>
<dbReference type="ChiTaRS" id="SERPINA4">
    <property type="organism name" value="human"/>
</dbReference>
<dbReference type="GeneWiki" id="SERPINA4"/>
<dbReference type="GenomeRNAi" id="5267"/>
<dbReference type="Pharos" id="P29622">
    <property type="development level" value="Tbio"/>
</dbReference>
<dbReference type="PRO" id="PR:P29622"/>
<dbReference type="Proteomes" id="UP000005640">
    <property type="component" value="Chromosome 14"/>
</dbReference>
<dbReference type="RNAct" id="P29622">
    <property type="molecule type" value="protein"/>
</dbReference>
<dbReference type="Bgee" id="ENSG00000100665">
    <property type="expression patterns" value="Expressed in right lobe of liver and 63 other cell types or tissues"/>
</dbReference>
<dbReference type="ExpressionAtlas" id="P29622">
    <property type="expression patterns" value="baseline and differential"/>
</dbReference>
<dbReference type="GO" id="GO:0070062">
    <property type="term" value="C:extracellular exosome"/>
    <property type="evidence" value="ECO:0007005"/>
    <property type="project" value="UniProtKB"/>
</dbReference>
<dbReference type="GO" id="GO:0005576">
    <property type="term" value="C:extracellular region"/>
    <property type="evidence" value="ECO:0007005"/>
    <property type="project" value="BHF-UCL"/>
</dbReference>
<dbReference type="GO" id="GO:0005615">
    <property type="term" value="C:extracellular space"/>
    <property type="evidence" value="ECO:0007005"/>
    <property type="project" value="BHF-UCL"/>
</dbReference>
<dbReference type="GO" id="GO:0031089">
    <property type="term" value="C:platelet dense granule lumen"/>
    <property type="evidence" value="ECO:0000304"/>
    <property type="project" value="Reactome"/>
</dbReference>
<dbReference type="GO" id="GO:0004867">
    <property type="term" value="F:serine-type endopeptidase inhibitor activity"/>
    <property type="evidence" value="ECO:0000318"/>
    <property type="project" value="GO_Central"/>
</dbReference>
<dbReference type="CDD" id="cd19552">
    <property type="entry name" value="serpinA4_KST"/>
    <property type="match status" value="1"/>
</dbReference>
<dbReference type="FunFam" id="3.30.497.10:FF:000001">
    <property type="entry name" value="Serine protease inhibitor"/>
    <property type="match status" value="1"/>
</dbReference>
<dbReference type="FunFam" id="2.30.39.10:FF:000002">
    <property type="entry name" value="Serpin family D member 1"/>
    <property type="match status" value="1"/>
</dbReference>
<dbReference type="Gene3D" id="2.30.39.10">
    <property type="entry name" value="Alpha-1-antitrypsin, domain 1"/>
    <property type="match status" value="1"/>
</dbReference>
<dbReference type="Gene3D" id="3.30.497.10">
    <property type="entry name" value="Antithrombin, subunit I, domain 2"/>
    <property type="match status" value="1"/>
</dbReference>
<dbReference type="InterPro" id="IPR023795">
    <property type="entry name" value="Serpin_CS"/>
</dbReference>
<dbReference type="InterPro" id="IPR023796">
    <property type="entry name" value="Serpin_dom"/>
</dbReference>
<dbReference type="InterPro" id="IPR000215">
    <property type="entry name" value="Serpin_fam"/>
</dbReference>
<dbReference type="InterPro" id="IPR036186">
    <property type="entry name" value="Serpin_sf"/>
</dbReference>
<dbReference type="InterPro" id="IPR042178">
    <property type="entry name" value="Serpin_sf_1"/>
</dbReference>
<dbReference type="InterPro" id="IPR042185">
    <property type="entry name" value="Serpin_sf_2"/>
</dbReference>
<dbReference type="PANTHER" id="PTHR11461:SF194">
    <property type="entry name" value="KALLISTATIN"/>
    <property type="match status" value="1"/>
</dbReference>
<dbReference type="PANTHER" id="PTHR11461">
    <property type="entry name" value="SERINE PROTEASE INHIBITOR, SERPIN"/>
    <property type="match status" value="1"/>
</dbReference>
<dbReference type="Pfam" id="PF00079">
    <property type="entry name" value="Serpin"/>
    <property type="match status" value="1"/>
</dbReference>
<dbReference type="SMART" id="SM00093">
    <property type="entry name" value="SERPIN"/>
    <property type="match status" value="1"/>
</dbReference>
<dbReference type="SUPFAM" id="SSF56574">
    <property type="entry name" value="Serpins"/>
    <property type="match status" value="1"/>
</dbReference>
<dbReference type="PROSITE" id="PS00284">
    <property type="entry name" value="SERPIN"/>
    <property type="match status" value="1"/>
</dbReference>
<reference key="1">
    <citation type="journal article" date="1993" name="J. Biol. Chem.">
        <title>Kallistatin: a novel human serine proteinase inhibitor. Molecular cloning, tissue distribution, and expression in Escherichia coli.</title>
        <authorList>
            <person name="Chai K.X."/>
            <person name="Chen L.-M."/>
            <person name="Chao J."/>
            <person name="Chao L."/>
        </authorList>
    </citation>
    <scope>NUCLEOTIDE SEQUENCE [MRNA]</scope>
    <scope>FUNCTION</scope>
</reference>
<reference key="2">
    <citation type="journal article" date="1994" name="Genomics">
        <title>Molecular cloning, sequence analysis, and chromosomal localization of the human protease inhibitor 4 (kallistatin) gene (PI4).</title>
        <authorList>
            <person name="Chai K.X."/>
            <person name="Ward D.C."/>
            <person name="Chao J."/>
            <person name="Chao L."/>
        </authorList>
    </citation>
    <scope>NUCLEOTIDE SEQUENCE [GENOMIC DNA]</scope>
</reference>
<reference key="3">
    <citation type="submission" date="2003-02" db="EMBL/GenBank/DDBJ databases">
        <title>Full-length cDNA libraries and normalization.</title>
        <authorList>
            <person name="Li W.B."/>
            <person name="Gruber C."/>
            <person name="Jessee J."/>
            <person name="Polayes D."/>
        </authorList>
    </citation>
    <scope>NUCLEOTIDE SEQUENCE [LARGE SCALE MRNA]</scope>
    <source>
        <tissue>Fetal liver</tissue>
    </source>
</reference>
<reference key="4">
    <citation type="journal article" date="2004" name="Genome Res.">
        <title>The status, quality, and expansion of the NIH full-length cDNA project: the Mammalian Gene Collection (MGC).</title>
        <authorList>
            <consortium name="The MGC Project Team"/>
        </authorList>
    </citation>
    <scope>NUCLEOTIDE SEQUENCE [LARGE SCALE MRNA]</scope>
    <source>
        <tissue>Colon</tissue>
    </source>
</reference>
<reference key="5">
    <citation type="journal article" date="1992" name="J. Biol. Chem.">
        <title>Kallistatin: a novel human tissue kallikrein inhibitor. Purification, characterization, and reactive center sequence.</title>
        <authorList>
            <person name="Zhou G.X."/>
            <person name="Chao L."/>
            <person name="Chao J."/>
        </authorList>
    </citation>
    <scope>PROTEIN SEQUENCE OF 388-403</scope>
    <source>
        <tissue>Plasma</tissue>
    </source>
</reference>
<reference key="6">
    <citation type="journal article" date="2003" name="Nat. Biotechnol.">
        <title>Identification and quantification of N-linked glycoproteins using hydrazide chemistry, stable isotope labeling and mass spectrometry.</title>
        <authorList>
            <person name="Zhang H."/>
            <person name="Li X.-J."/>
            <person name="Martin D.B."/>
            <person name="Aebersold R."/>
        </authorList>
    </citation>
    <scope>GLYCOSYLATION AT ASN-157</scope>
</reference>
<reference key="7">
    <citation type="journal article" date="2005" name="J. Proteome Res.">
        <title>Human plasma N-glycoproteome analysis by immunoaffinity subtraction, hydrazide chemistry, and mass spectrometry.</title>
        <authorList>
            <person name="Liu T."/>
            <person name="Qian W.-J."/>
            <person name="Gritsenko M.A."/>
            <person name="Camp D.G. II"/>
            <person name="Monroe M.E."/>
            <person name="Moore R.J."/>
            <person name="Smith R.D."/>
        </authorList>
    </citation>
    <scope>GLYCOSYLATION [LARGE SCALE ANALYSIS] AT ASN-108; ASN-157 AND ASN-238</scope>
    <source>
        <tissue>Plasma</tissue>
    </source>
</reference>
<reference key="8">
    <citation type="journal article" date="2009" name="Mol. Cell. Proteomics">
        <title>A strategy for precise and large scale identification of core fucosylated glycoproteins.</title>
        <authorList>
            <person name="Jia W."/>
            <person name="Lu Z."/>
            <person name="Fu Y."/>
            <person name="Wang H.P."/>
            <person name="Wang L.H."/>
            <person name="Chi H."/>
            <person name="Yuan Z.F."/>
            <person name="Zheng Z.B."/>
            <person name="Song L.N."/>
            <person name="Han H.H."/>
            <person name="Liang Y.M."/>
            <person name="Wang J.L."/>
            <person name="Cai Y."/>
            <person name="Zhang Y.K."/>
            <person name="Deng Y.L."/>
            <person name="Ying W.T."/>
            <person name="He S.M."/>
            <person name="Qian X.H."/>
        </authorList>
    </citation>
    <scope>GLYCOSYLATION AT ASN-238</scope>
</reference>
<name>KAIN_HUMAN</name>
<gene>
    <name type="primary">SERPINA4</name>
    <name type="synonym">KST</name>
    <name type="synonym">PI4</name>
</gene>
<accession>P29622</accession>
<accession>Q53XB5</accession>
<accession>Q86TR9</accession>
<accession>Q96BZ5</accession>
<sequence length="427" mass="48542">MHLIDYLLLLLVGLLALSHGQLHVEHDGESCSNSSHQQILETGEGSPSLKIAPANADFAFRFYYLIASETPGKNIFFSPLSISAAYAMLSLGACSHSRSQILEGLGFNLTELSESDVHRGFQHLLHTLNLPGHGLETRVGSALFLSHNLKFLAKFLNDTMAVYEAKLFHTNFYDTVGTIQLINDHVKKETRGKIVDLVSELKKDVLMVLVNYIYFKALWEKPFISSRTTPKDFYVDENTTVRVPMMLQDQEHHWYLHDRYLPCSVLRMDYKGDATVFFILPNQGKMREIEEVLTPEMLMRWNNLLRKRNFYKKLELHLPKFSISGSYVLDQILPRLGFTDLFSKWADLSGITKQQKLEASKSFHKATLDVDEAGTEAAAATSFAIKFFSAQTNRHILRFNRPFLVVIFSTSTQSVLFLGKVVDPTKP</sequence>
<proteinExistence type="evidence at protein level"/>
<comment type="function">
    <text evidence="5">Inhibits human amidolytic and kininogenase activities of tissue kallikrein. Inhibition is achieved by formation of an equimolar, heat- and SDS-stable complex between the inhibitor and the enzyme, and generation of a small C-terminal fragment of the inhibitor due to cleavage at the reactive site by tissue kallikrein.</text>
</comment>
<comment type="subunit">
    <text>Monomer and some homodimers.</text>
</comment>
<comment type="interaction">
    <interactant intactId="EBI-7108503">
        <id>P29622</id>
    </interactant>
    <interactant intactId="EBI-2477093">
        <id>Q9NWM8</id>
        <label>FKBP14</label>
    </interactant>
    <organismsDiffer>false</organismsDiffer>
    <experiments>2</experiments>
</comment>
<comment type="subcellular location">
    <subcellularLocation>
        <location>Secreted</location>
    </subcellularLocation>
</comment>
<comment type="tissue specificity">
    <text>Expressed by the liver and secreted in plasma.</text>
</comment>
<comment type="PTM">
    <text>The N-terminus is blocked.</text>
</comment>
<comment type="miscellaneous">
    <text>Heparin blocks kallistatin's complex formation with tissue kallikrein and abolishes its inhibitory effect on tissue kallikrein's activity.</text>
</comment>
<comment type="similarity">
    <text evidence="6">Belongs to the serpin family.</text>
</comment>
<comment type="sequence caution" evidence="6">
    <conflict type="erroneous initiation">
        <sequence resource="EMBL-CDS" id="CAD66567"/>
    </conflict>
</comment>
<protein>
    <recommendedName>
        <fullName>Kallistatin</fullName>
    </recommendedName>
    <alternativeName>
        <fullName>Kallikrein inhibitor</fullName>
    </alternativeName>
    <alternativeName>
        <fullName>Peptidase inhibitor 4</fullName>
        <shortName>PI-4</shortName>
    </alternativeName>
    <alternativeName>
        <fullName>Serpin A4</fullName>
    </alternativeName>
</protein>